<protein>
    <recommendedName>
        <fullName evidence="4">Sodium channel neurotoxin MeuNaTxalpha-9</fullName>
    </recommendedName>
</protein>
<reference key="1">
    <citation type="journal article" date="2012" name="Mol. Cell. Proteomics">
        <title>Evolutionary diversification of Mesobuthus alpha-scorpion toxins affecting sodium channels.</title>
        <authorList>
            <person name="Zhu S."/>
            <person name="Peigneur S."/>
            <person name="Gao B."/>
            <person name="Lu X."/>
            <person name="Cao C."/>
            <person name="Tytgat J."/>
        </authorList>
    </citation>
    <scope>NUCLEOTIDE SEQUENCE [MRNA]</scope>
    <scope>PROBABLE AMIDATION AT ARG-64</scope>
    <source>
        <tissue>Venom gland</tissue>
    </source>
</reference>
<keyword id="KW-0027">Amidation</keyword>
<keyword id="KW-1015">Disulfide bond</keyword>
<keyword id="KW-0872">Ion channel impairing toxin</keyword>
<keyword id="KW-0528">Neurotoxin</keyword>
<keyword id="KW-0964">Secreted</keyword>
<keyword id="KW-0800">Toxin</keyword>
<keyword id="KW-0738">Voltage-gated sodium channel impairing toxin</keyword>
<comment type="function">
    <text evidence="1">Alpha toxins bind voltage-independently at site-3 of sodium channels (Nav) and inhibit the inactivation of the activated channels, thereby blocking neuronal transmission.</text>
</comment>
<comment type="subcellular location">
    <subcellularLocation>
        <location evidence="3">Secreted</location>
    </subcellularLocation>
</comment>
<comment type="tissue specificity">
    <text evidence="6">Expressed by the venom gland.</text>
</comment>
<comment type="domain">
    <text evidence="5">Has the structural arrangement of an alpha-helix connected to antiparallel beta-sheets by disulfide bonds (CS-alpha/beta).</text>
</comment>
<comment type="similarity">
    <text evidence="5">Belongs to the long (4 C-C) scorpion toxin superfamily. Sodium channel inhibitor family. Alpha subfamily.</text>
</comment>
<name>SCXN9_MESEU</name>
<feature type="chain" id="PRO_0000447452" description="Sodium channel neurotoxin MeuNaTxalpha-9" evidence="6">
    <location>
        <begin position="1"/>
        <end position="64"/>
    </location>
</feature>
<feature type="domain" description="LCN-type CS-alpha/beta" evidence="2">
    <location>
        <begin position="2"/>
        <end position="64"/>
    </location>
</feature>
<feature type="modified residue" description="Arginine amide" evidence="6">
    <location>
        <position position="64"/>
    </location>
</feature>
<feature type="disulfide bond" evidence="1">
    <location>
        <begin position="12"/>
        <end position="63"/>
    </location>
</feature>
<feature type="disulfide bond" evidence="1">
    <location>
        <begin position="16"/>
        <end position="36"/>
    </location>
</feature>
<feature type="disulfide bond" evidence="1">
    <location>
        <begin position="22"/>
        <end position="46"/>
    </location>
</feature>
<feature type="disulfide bond" evidence="1">
    <location>
        <begin position="26"/>
        <end position="48"/>
    </location>
</feature>
<organism>
    <name type="scientific">Mesobuthus eupeus</name>
    <name type="common">Lesser Asian scorpion</name>
    <name type="synonym">Buthus eupeus</name>
    <dbReference type="NCBI Taxonomy" id="34648"/>
    <lineage>
        <taxon>Eukaryota</taxon>
        <taxon>Metazoa</taxon>
        <taxon>Ecdysozoa</taxon>
        <taxon>Arthropoda</taxon>
        <taxon>Chelicerata</taxon>
        <taxon>Arachnida</taxon>
        <taxon>Scorpiones</taxon>
        <taxon>Buthida</taxon>
        <taxon>Buthoidea</taxon>
        <taxon>Buthidae</taxon>
        <taxon>Mesobuthus</taxon>
    </lineage>
</organism>
<accession>D8UWD8</accession>
<proteinExistence type="evidence at protein level"/>
<sequence>ARDGYIANDRNCVYTCALNPYCDSECKKNGADSGYCQWFGRFGNACWCKNLPDKVPIRIPGECRG</sequence>
<evidence type="ECO:0000250" key="1">
    <source>
        <dbReference type="UniProtKB" id="P86405"/>
    </source>
</evidence>
<evidence type="ECO:0000255" key="2">
    <source>
        <dbReference type="PROSITE-ProRule" id="PRU01210"/>
    </source>
</evidence>
<evidence type="ECO:0000269" key="3">
    <source>
    </source>
</evidence>
<evidence type="ECO:0000303" key="4">
    <source>
    </source>
</evidence>
<evidence type="ECO:0000305" key="5"/>
<evidence type="ECO:0000305" key="6">
    <source>
    </source>
</evidence>
<dbReference type="EMBL" id="GQ249203">
    <property type="protein sequence ID" value="ADF49575.1"/>
    <property type="molecule type" value="mRNA"/>
</dbReference>
<dbReference type="SMR" id="D8UWD8"/>
<dbReference type="GO" id="GO:0005576">
    <property type="term" value="C:extracellular region"/>
    <property type="evidence" value="ECO:0007669"/>
    <property type="project" value="UniProtKB-SubCell"/>
</dbReference>
<dbReference type="GO" id="GO:0019871">
    <property type="term" value="F:sodium channel inhibitor activity"/>
    <property type="evidence" value="ECO:0007669"/>
    <property type="project" value="InterPro"/>
</dbReference>
<dbReference type="GO" id="GO:0090729">
    <property type="term" value="F:toxin activity"/>
    <property type="evidence" value="ECO:0007669"/>
    <property type="project" value="UniProtKB-KW"/>
</dbReference>
<dbReference type="GO" id="GO:0006952">
    <property type="term" value="P:defense response"/>
    <property type="evidence" value="ECO:0007669"/>
    <property type="project" value="InterPro"/>
</dbReference>
<dbReference type="CDD" id="cd23106">
    <property type="entry name" value="neurotoxins_LC_scorpion"/>
    <property type="match status" value="1"/>
</dbReference>
<dbReference type="FunFam" id="3.30.30.10:FF:000002">
    <property type="entry name" value="Alpha-like toxin BmK-M1"/>
    <property type="match status" value="1"/>
</dbReference>
<dbReference type="Gene3D" id="3.30.30.10">
    <property type="entry name" value="Knottin, scorpion toxin-like"/>
    <property type="match status" value="1"/>
</dbReference>
<dbReference type="InterPro" id="IPR044062">
    <property type="entry name" value="LCN-type_CS_alpha_beta_dom"/>
</dbReference>
<dbReference type="InterPro" id="IPR003614">
    <property type="entry name" value="Scorpion_toxin-like"/>
</dbReference>
<dbReference type="InterPro" id="IPR036574">
    <property type="entry name" value="Scorpion_toxin-like_sf"/>
</dbReference>
<dbReference type="InterPro" id="IPR018218">
    <property type="entry name" value="Scorpion_toxinL"/>
</dbReference>
<dbReference type="InterPro" id="IPR002061">
    <property type="entry name" value="Scorpion_toxinL/defensin"/>
</dbReference>
<dbReference type="Pfam" id="PF00537">
    <property type="entry name" value="Toxin_3"/>
    <property type="match status" value="1"/>
</dbReference>
<dbReference type="PRINTS" id="PR00285">
    <property type="entry name" value="SCORPNTOXIN"/>
</dbReference>
<dbReference type="SMART" id="SM00505">
    <property type="entry name" value="Knot1"/>
    <property type="match status" value="1"/>
</dbReference>
<dbReference type="SUPFAM" id="SSF57095">
    <property type="entry name" value="Scorpion toxin-like"/>
    <property type="match status" value="1"/>
</dbReference>
<dbReference type="PROSITE" id="PS51863">
    <property type="entry name" value="LCN_CSAB"/>
    <property type="match status" value="1"/>
</dbReference>